<name>ATPF_MYCPU</name>
<comment type="function">
    <text evidence="1">F(1)F(0) ATP synthase produces ATP from ADP in the presence of a proton or sodium gradient. F-type ATPases consist of two structural domains, F(1) containing the extramembraneous catalytic core and F(0) containing the membrane proton channel, linked together by a central stalk and a peripheral stalk. During catalysis, ATP synthesis in the catalytic domain of F(1) is coupled via a rotary mechanism of the central stalk subunits to proton translocation.</text>
</comment>
<comment type="function">
    <text evidence="1">Component of the F(0) channel, it forms part of the peripheral stalk, linking F(1) to F(0).</text>
</comment>
<comment type="subunit">
    <text evidence="1">F-type ATPases have 2 components, F(1) - the catalytic core - and F(0) - the membrane proton channel. F(1) has five subunits: alpha(3), beta(3), gamma(1), delta(1), epsilon(1). F(0) has three main subunits: a(1), b(2) and c(10-14). The alpha and beta chains form an alternating ring which encloses part of the gamma chain. F(1) is attached to F(0) by a central stalk formed by the gamma and epsilon chains, while a peripheral stalk is formed by the delta and b chains.</text>
</comment>
<comment type="subcellular location">
    <subcellularLocation>
        <location evidence="1">Cell membrane</location>
        <topology evidence="1">Single-pass membrane protein</topology>
    </subcellularLocation>
</comment>
<comment type="similarity">
    <text evidence="1">Belongs to the ATPase B chain family.</text>
</comment>
<gene>
    <name evidence="1" type="primary">atpF</name>
    <name type="ordered locus">MYPU_2700</name>
</gene>
<organism>
    <name type="scientific">Mycoplasmopsis pulmonis (strain UAB CTIP)</name>
    <name type="common">Mycoplasma pulmonis</name>
    <dbReference type="NCBI Taxonomy" id="272635"/>
    <lineage>
        <taxon>Bacteria</taxon>
        <taxon>Bacillati</taxon>
        <taxon>Mycoplasmatota</taxon>
        <taxon>Mycoplasmoidales</taxon>
        <taxon>Metamycoplasmataceae</taxon>
        <taxon>Mycoplasmopsis</taxon>
    </lineage>
</organism>
<proteinExistence type="inferred from homology"/>
<reference key="1">
    <citation type="journal article" date="2001" name="Nucleic Acids Res.">
        <title>The complete genome sequence of the murine respiratory pathogen Mycoplasma pulmonis.</title>
        <authorList>
            <person name="Chambaud I."/>
            <person name="Heilig R."/>
            <person name="Ferris S."/>
            <person name="Barbe V."/>
            <person name="Samson D."/>
            <person name="Galisson F."/>
            <person name="Moszer I."/>
            <person name="Dybvig K."/>
            <person name="Wroblewski H."/>
            <person name="Viari A."/>
            <person name="Rocha E.P.C."/>
            <person name="Blanchard A."/>
        </authorList>
    </citation>
    <scope>NUCLEOTIDE SEQUENCE [LARGE SCALE GENOMIC DNA]</scope>
    <source>
        <strain>UAB CTIP</strain>
    </source>
</reference>
<dbReference type="EMBL" id="AL445563">
    <property type="protein sequence ID" value="CAC13443.1"/>
    <property type="molecule type" value="Genomic_DNA"/>
</dbReference>
<dbReference type="PIR" id="F90545">
    <property type="entry name" value="F90545"/>
</dbReference>
<dbReference type="RefSeq" id="WP_010925074.1">
    <property type="nucleotide sequence ID" value="NC_002771.1"/>
</dbReference>
<dbReference type="SMR" id="Q98QU1"/>
<dbReference type="STRING" id="272635.gene:17576860"/>
<dbReference type="KEGG" id="mpu:MYPU_2700"/>
<dbReference type="eggNOG" id="COG0711">
    <property type="taxonomic scope" value="Bacteria"/>
</dbReference>
<dbReference type="HOGENOM" id="CLU_079215_4_3_14"/>
<dbReference type="BioCyc" id="MPUL272635:G1GT6-271-MONOMER"/>
<dbReference type="Proteomes" id="UP000000528">
    <property type="component" value="Chromosome"/>
</dbReference>
<dbReference type="GO" id="GO:0005886">
    <property type="term" value="C:plasma membrane"/>
    <property type="evidence" value="ECO:0007669"/>
    <property type="project" value="UniProtKB-SubCell"/>
</dbReference>
<dbReference type="GO" id="GO:0045259">
    <property type="term" value="C:proton-transporting ATP synthase complex"/>
    <property type="evidence" value="ECO:0007669"/>
    <property type="project" value="UniProtKB-KW"/>
</dbReference>
<dbReference type="GO" id="GO:0046933">
    <property type="term" value="F:proton-transporting ATP synthase activity, rotational mechanism"/>
    <property type="evidence" value="ECO:0007669"/>
    <property type="project" value="UniProtKB-UniRule"/>
</dbReference>
<dbReference type="GO" id="GO:0046961">
    <property type="term" value="F:proton-transporting ATPase activity, rotational mechanism"/>
    <property type="evidence" value="ECO:0007669"/>
    <property type="project" value="TreeGrafter"/>
</dbReference>
<dbReference type="CDD" id="cd06503">
    <property type="entry name" value="ATP-synt_Fo_b"/>
    <property type="match status" value="1"/>
</dbReference>
<dbReference type="Gene3D" id="1.20.5.620">
    <property type="entry name" value="F1F0 ATP synthase subunit B, membrane domain"/>
    <property type="match status" value="1"/>
</dbReference>
<dbReference type="HAMAP" id="MF_01398">
    <property type="entry name" value="ATP_synth_b_bprime"/>
    <property type="match status" value="1"/>
</dbReference>
<dbReference type="InterPro" id="IPR028987">
    <property type="entry name" value="ATP_synth_B-like_membr_sf"/>
</dbReference>
<dbReference type="InterPro" id="IPR002146">
    <property type="entry name" value="ATP_synth_b/b'su_bac/chlpt"/>
</dbReference>
<dbReference type="InterPro" id="IPR005864">
    <property type="entry name" value="ATP_synth_F0_bsu_bac"/>
</dbReference>
<dbReference type="InterPro" id="IPR050059">
    <property type="entry name" value="ATP_synthase_B_chain"/>
</dbReference>
<dbReference type="NCBIfam" id="TIGR01144">
    <property type="entry name" value="ATP_synt_b"/>
    <property type="match status" value="1"/>
</dbReference>
<dbReference type="PANTHER" id="PTHR33445:SF1">
    <property type="entry name" value="ATP SYNTHASE SUBUNIT B"/>
    <property type="match status" value="1"/>
</dbReference>
<dbReference type="PANTHER" id="PTHR33445">
    <property type="entry name" value="ATP SYNTHASE SUBUNIT B', CHLOROPLASTIC"/>
    <property type="match status" value="1"/>
</dbReference>
<dbReference type="Pfam" id="PF00430">
    <property type="entry name" value="ATP-synt_B"/>
    <property type="match status" value="1"/>
</dbReference>
<dbReference type="SUPFAM" id="SSF81573">
    <property type="entry name" value="F1F0 ATP synthase subunit B, membrane domain"/>
    <property type="match status" value="1"/>
</dbReference>
<feature type="chain" id="PRO_0000368615" description="ATP synthase subunit b">
    <location>
        <begin position="1"/>
        <end position="180"/>
    </location>
</feature>
<feature type="transmembrane region" description="Helical" evidence="1">
    <location>
        <begin position="26"/>
        <end position="46"/>
    </location>
</feature>
<sequence length="180" mass="21136">MNFGANLLTNYNEELTEKFYRLFPSIPLMLATLAALVISIFFLTYFFYKPIRKNIKKRKQYIQDNIDAANKLKQQSLENLEESNKKLNEAREQASEIINSSKRDAELIVINYKMSAQKKSEEILKKAQLEIKRKEEEFLRTSREEIIDAATIIAKKILIKEIDSNYEKKIIDDISFDSEK</sequence>
<accession>Q98QU1</accession>
<evidence type="ECO:0000255" key="1">
    <source>
        <dbReference type="HAMAP-Rule" id="MF_01398"/>
    </source>
</evidence>
<protein>
    <recommendedName>
        <fullName evidence="1">ATP synthase subunit b</fullName>
    </recommendedName>
    <alternativeName>
        <fullName evidence="1">ATP synthase F(0) sector subunit b</fullName>
    </alternativeName>
    <alternativeName>
        <fullName evidence="1">ATPase subunit I</fullName>
    </alternativeName>
    <alternativeName>
        <fullName evidence="1">F-type ATPase subunit b</fullName>
        <shortName evidence="1">F-ATPase subunit b</shortName>
    </alternativeName>
</protein>
<keyword id="KW-0066">ATP synthesis</keyword>
<keyword id="KW-1003">Cell membrane</keyword>
<keyword id="KW-0138">CF(0)</keyword>
<keyword id="KW-0375">Hydrogen ion transport</keyword>
<keyword id="KW-0406">Ion transport</keyword>
<keyword id="KW-0472">Membrane</keyword>
<keyword id="KW-1185">Reference proteome</keyword>
<keyword id="KW-0812">Transmembrane</keyword>
<keyword id="KW-1133">Transmembrane helix</keyword>
<keyword id="KW-0813">Transport</keyword>